<proteinExistence type="inferred from homology"/>
<accession>Q329C3</accession>
<dbReference type="EMBL" id="CP000034">
    <property type="protein sequence ID" value="ABB64082.1"/>
    <property type="status" value="ALT_INIT"/>
    <property type="molecule type" value="Genomic_DNA"/>
</dbReference>
<dbReference type="RefSeq" id="WP_000399738.1">
    <property type="nucleotide sequence ID" value="NC_007606.1"/>
</dbReference>
<dbReference type="RefSeq" id="YP_405573.2">
    <property type="nucleotide sequence ID" value="NC_007606.1"/>
</dbReference>
<dbReference type="SMR" id="Q329C3"/>
<dbReference type="STRING" id="300267.SDY_4176"/>
<dbReference type="EnsemblBacteria" id="ABB64082">
    <property type="protein sequence ID" value="ABB64082"/>
    <property type="gene ID" value="SDY_4176"/>
</dbReference>
<dbReference type="KEGG" id="sdy:SDY_4176"/>
<dbReference type="PATRIC" id="fig|300267.13.peg.4911"/>
<dbReference type="HOGENOM" id="CLU_024648_1_0_6"/>
<dbReference type="Proteomes" id="UP000002716">
    <property type="component" value="Chromosome"/>
</dbReference>
<dbReference type="GO" id="GO:0071949">
    <property type="term" value="F:FAD binding"/>
    <property type="evidence" value="ECO:0007669"/>
    <property type="project" value="InterPro"/>
</dbReference>
<dbReference type="FunFam" id="3.50.50.60:FF:000151">
    <property type="entry name" value="Protein CbrA"/>
    <property type="match status" value="1"/>
</dbReference>
<dbReference type="Gene3D" id="3.50.50.60">
    <property type="entry name" value="FAD/NAD(P)-binding domain"/>
    <property type="match status" value="1"/>
</dbReference>
<dbReference type="InterPro" id="IPR002938">
    <property type="entry name" value="FAD-bd"/>
</dbReference>
<dbReference type="InterPro" id="IPR036188">
    <property type="entry name" value="FAD/NAD-bd_sf"/>
</dbReference>
<dbReference type="InterPro" id="IPR050407">
    <property type="entry name" value="Geranylgeranyl_reductase"/>
</dbReference>
<dbReference type="NCBIfam" id="NF008519">
    <property type="entry name" value="PRK11445.1"/>
    <property type="match status" value="1"/>
</dbReference>
<dbReference type="PANTHER" id="PTHR42685:SF22">
    <property type="entry name" value="CONDITIONED MEDIUM FACTOR RECEPTOR 1"/>
    <property type="match status" value="1"/>
</dbReference>
<dbReference type="PANTHER" id="PTHR42685">
    <property type="entry name" value="GERANYLGERANYL DIPHOSPHATE REDUCTASE"/>
    <property type="match status" value="1"/>
</dbReference>
<dbReference type="Pfam" id="PF01494">
    <property type="entry name" value="FAD_binding_3"/>
    <property type="match status" value="1"/>
</dbReference>
<dbReference type="PRINTS" id="PR00420">
    <property type="entry name" value="RNGMNOXGNASE"/>
</dbReference>
<dbReference type="SUPFAM" id="SSF51905">
    <property type="entry name" value="FAD/NAD(P)-binding domain"/>
    <property type="match status" value="1"/>
</dbReference>
<comment type="similarity">
    <text evidence="1">Belongs to the CbrA family.</text>
</comment>
<comment type="sequence caution" evidence="1">
    <conflict type="erroneous initiation">
        <sequence resource="EMBL-CDS" id="ABB64082"/>
    </conflict>
</comment>
<evidence type="ECO:0000305" key="1"/>
<reference key="1">
    <citation type="journal article" date="2005" name="Nucleic Acids Res.">
        <title>Genome dynamics and diversity of Shigella species, the etiologic agents of bacillary dysentery.</title>
        <authorList>
            <person name="Yang F."/>
            <person name="Yang J."/>
            <person name="Zhang X."/>
            <person name="Chen L."/>
            <person name="Jiang Y."/>
            <person name="Yan Y."/>
            <person name="Tang X."/>
            <person name="Wang J."/>
            <person name="Xiong Z."/>
            <person name="Dong J."/>
            <person name="Xue Y."/>
            <person name="Zhu Y."/>
            <person name="Xu X."/>
            <person name="Sun L."/>
            <person name="Chen S."/>
            <person name="Nie H."/>
            <person name="Peng J."/>
            <person name="Xu J."/>
            <person name="Wang Y."/>
            <person name="Yuan Z."/>
            <person name="Wen Y."/>
            <person name="Yao Z."/>
            <person name="Shen Y."/>
            <person name="Qiang B."/>
            <person name="Hou Y."/>
            <person name="Yu J."/>
            <person name="Jin Q."/>
        </authorList>
    </citation>
    <scope>NUCLEOTIDE SEQUENCE [LARGE SCALE GENOMIC DNA]</scope>
    <source>
        <strain>Sd197</strain>
    </source>
</reference>
<feature type="chain" id="PRO_0000320286" description="Protein CbrA">
    <location>
        <begin position="1"/>
        <end position="354"/>
    </location>
</feature>
<gene>
    <name type="primary">cbrA</name>
    <name type="ordered locus">SDY_4176</name>
</gene>
<name>CBRA_SHIDS</name>
<protein>
    <recommendedName>
        <fullName>Protein CbrA</fullName>
    </recommendedName>
</protein>
<sequence>MEHFDVAIIGLGPAGSALARKLAGKMQVIALDKKHQCGTEGFSKPCGGLLAPDAQRSFIRDGLTLPVDVIANPQIFSVKTVDVAASLTRNYQRSYININRYAFDLWMKSLIPASVEVYHDNLCRKIWREDDKWHVIFRADGWEQHITARYLVGADGANSMVRRYLYPDHQIRKYVAIQQWFAEKHPVPFYSCIFDNAITDCYSWSISKDGYFIFGGAYPMKDGQTRFTTLKEKMSAFQFQFGKAVKSEKCTVLFPSRWQDFVCGKDNAFLIGEAAGFISASSLEGISYALDSAEILRSVLLKQPEKINAAYWHATCKLRLKLFGKIVKSRCLTAPALRKWIMRSGMAHIPQLKD</sequence>
<organism>
    <name type="scientific">Shigella dysenteriae serotype 1 (strain Sd197)</name>
    <dbReference type="NCBI Taxonomy" id="300267"/>
    <lineage>
        <taxon>Bacteria</taxon>
        <taxon>Pseudomonadati</taxon>
        <taxon>Pseudomonadota</taxon>
        <taxon>Gammaproteobacteria</taxon>
        <taxon>Enterobacterales</taxon>
        <taxon>Enterobacteriaceae</taxon>
        <taxon>Shigella</taxon>
    </lineage>
</organism>
<keyword id="KW-1185">Reference proteome</keyword>